<evidence type="ECO:0000269" key="1">
    <source>
    </source>
</evidence>
<evidence type="ECO:0000269" key="2">
    <source>
    </source>
</evidence>
<evidence type="ECO:0000269" key="3">
    <source>
    </source>
</evidence>
<evidence type="ECO:0000269" key="4">
    <source>
    </source>
</evidence>
<evidence type="ECO:0000269" key="5">
    <source>
    </source>
</evidence>
<evidence type="ECO:0000269" key="6">
    <source>
    </source>
</evidence>
<evidence type="ECO:0000269" key="7">
    <source>
    </source>
</evidence>
<evidence type="ECO:0000269" key="8">
    <source>
    </source>
</evidence>
<evidence type="ECO:0000269" key="9">
    <source>
    </source>
</evidence>
<evidence type="ECO:0000269" key="10">
    <source>
    </source>
</evidence>
<evidence type="ECO:0000269" key="11">
    <source>
    </source>
</evidence>
<evidence type="ECO:0000269" key="12">
    <source>
    </source>
</evidence>
<evidence type="ECO:0000269" key="13">
    <source>
    </source>
</evidence>
<evidence type="ECO:0000269" key="14">
    <source>
    </source>
</evidence>
<evidence type="ECO:0000269" key="15">
    <source>
    </source>
</evidence>
<evidence type="ECO:0000303" key="16">
    <source>
    </source>
</evidence>
<evidence type="ECO:0000303" key="17">
    <source>
    </source>
</evidence>
<evidence type="ECO:0000305" key="18"/>
<evidence type="ECO:0007744" key="19">
    <source>
        <dbReference type="PDB" id="5O9Z"/>
    </source>
</evidence>
<evidence type="ECO:0007744" key="20">
    <source>
        <dbReference type="PDB" id="6Y50"/>
    </source>
</evidence>
<evidence type="ECO:0007744" key="21">
    <source>
        <dbReference type="PDB" id="6Y5Q"/>
    </source>
</evidence>
<evidence type="ECO:0007744" key="22">
    <source>
        <dbReference type="PDB" id="7DVQ"/>
    </source>
</evidence>
<evidence type="ECO:0007744" key="23">
    <source>
        <dbReference type="PDB" id="7Q3L"/>
    </source>
</evidence>
<evidence type="ECO:0007744" key="24">
    <source>
        <dbReference type="PDB" id="8HK1"/>
    </source>
</evidence>
<evidence type="ECO:0007744" key="25">
    <source>
    </source>
</evidence>
<evidence type="ECO:0007829" key="26">
    <source>
        <dbReference type="PDB" id="6FF4"/>
    </source>
</evidence>
<evidence type="ECO:0007829" key="27">
    <source>
        <dbReference type="PDB" id="7B0I"/>
    </source>
</evidence>
<evidence type="ECO:0007829" key="28">
    <source>
        <dbReference type="PDB" id="7B91"/>
    </source>
</evidence>
<evidence type="ECO:0007829" key="29">
    <source>
        <dbReference type="PDB" id="7B9C"/>
    </source>
</evidence>
<evidence type="ECO:0007829" key="30">
    <source>
        <dbReference type="PDB" id="7DVQ"/>
    </source>
</evidence>
<evidence type="ECO:0007829" key="31">
    <source>
        <dbReference type="PDB" id="7EVN"/>
    </source>
</evidence>
<evidence type="ECO:0007829" key="32">
    <source>
        <dbReference type="PDB" id="7EVO"/>
    </source>
</evidence>
<evidence type="ECO:0007829" key="33">
    <source>
        <dbReference type="PDB" id="7OPI"/>
    </source>
</evidence>
<evidence type="ECO:0007829" key="34">
    <source>
        <dbReference type="PDB" id="7Q3L"/>
    </source>
</evidence>
<evidence type="ECO:0007829" key="35">
    <source>
        <dbReference type="PDB" id="7Q4O"/>
    </source>
</evidence>
<evidence type="ECO:0007829" key="36">
    <source>
        <dbReference type="PDB" id="7Q4P"/>
    </source>
</evidence>
<evidence type="ECO:0007829" key="37">
    <source>
        <dbReference type="PDB" id="7QTT"/>
    </source>
</evidence>
<sequence length="1217" mass="135577">MFLYNLTLQRATGISFAIHGNFSGTKQQEIVVSRGKILELLRPDPNTGKVHTLLTVEVFGVIRSLMAFRLTGGTKDYIVVGSDSGRIVILEYQPSKNMFEKIHQETFGKSGCRRIVPGQFLAVDPKGRAVMISAIEKQKLVYILNRDAAARLTISSPLEAHKANTLVYHVVGVDVGFENPMFACLEMDYEEADNDPTGEAAANTQQTLTFYELDLGLNHVVRKYSEPLEEHGNFLITVPGGSDGPSGVLICSENYITYKNFGDQPDIRCPIPRRRNDLDDPERGMIFVCSATHKTKSMFFFLAQTEQGDIFKITLETDEDMVTEIRLKYFDTVPVAAAMCVLKTGFLFVASEFGNHYLYQIAHLGDDDEEPEFSSAMPLEEGDTFFFQPRPLKNLVLVDELDSLSPILFCQIADLANEDTPQLYVACGRGPRSSLRVLRHGLEVSEMAVSELPGNPNAVWTVRRHIEDEFDAYIIVSFVNATLVLSIGETVEEVTDSGFLGTTPTLSCSLLGDDALVQVYPDGIRHIRADKRVNEWKTPGKKTIVKCAVNQRQVVIALTGGELVYFEMDPSGQLNEYTERKEMSADVVCMSLANVPPGEQRSRFLAVGLVDNTVRIISLDPSDCLQPLSMQALPAQPESLCIVEMGGTEKQDELGERGSIGFLYLNIGLQNGVLLRTVLDPVTGDLSDTRTRYLGSRPVKLFRVRMQGQEAVLAMSSRSWLSYSYQSRFHLTPLSYETLEFASGFASEQCPEGIVAISTNTLRILALEKLGAVFNQVAFPLQYTPRKFVIHPESNNLIIIETDHNAYTEATKAQRKQQMAEEMVEAAGEDERELAAEMAAAFLNENLPESIFGAPKAGNGQWASVIRVMNPIQGNTLDLVQLEQNEAAFSVAVCRFSNTGEDWYVLVGVAKDLILNPRSVAGGFVYTYKLVNNGEKLEFLHKTPVEEVPAAIAPFQGRVLIGVGKLLRVYDLGKKKLLRKCENKHIANYISGIQTIGHRVIVSDVQESFIWVRYKRNENQLIIFADDTYPRWVTTASLLDYDTVAGADKFGNICVVRLPPNTNDEVDEDPTGNKALWDRGLLNGASQKAEVIMNYHVGETVLSLQKTTLIPGGSESLVYTTLSGGIGILVPFTSHEDHDFFQHVEMHLRSEHPPLCGRDHLSFRSYYFPVKNVIDGDLCEQFNSMEPNKQKNVSEELDRTPPEVSKKLEDIRTRYAF</sequence>
<feature type="chain" id="PRO_0000218639" description="Splicing factor 3B subunit 3">
    <location>
        <begin position="1"/>
        <end position="1217"/>
    </location>
</feature>
<feature type="region of interest" description="Interaction with PHF5A, SF3B1 and SF3B5" evidence="9">
    <location>
        <begin position="105"/>
        <end position="119"/>
    </location>
</feature>
<feature type="region of interest" description="Interaction with PHF5A, SF3B1 and SF3B5" evidence="9">
    <location>
        <begin position="145"/>
        <end position="168"/>
    </location>
</feature>
<feature type="region of interest" description="Interaction with SF3B1 and SF3B5" evidence="9">
    <location>
        <begin position="193"/>
        <end position="231"/>
    </location>
</feature>
<feature type="region of interest" description="Interaction with SF3B1 and SF3B5" evidence="9">
    <location>
        <begin position="786"/>
        <end position="804"/>
    </location>
</feature>
<feature type="region of interest" description="Interaction with SF3B1" evidence="9">
    <location>
        <begin position="1028"/>
        <end position="1049"/>
    </location>
</feature>
<feature type="region of interest" description="Interaction with SF3B5" evidence="9">
    <location>
        <begin position="1100"/>
        <end position="1123"/>
    </location>
</feature>
<feature type="site" description="Interaction with SF3B5" evidence="9">
    <location>
        <position position="284"/>
    </location>
</feature>
<feature type="site" description="Interaction with SF3B5" evidence="9">
    <location>
        <position position="306"/>
    </location>
</feature>
<feature type="site" description="Interaction with SF3B5" evidence="9">
    <location>
        <position position="352"/>
    </location>
</feature>
<feature type="site" description="Interaction with SF3B5" evidence="9">
    <location>
        <position position="429"/>
    </location>
</feature>
<feature type="site" description="Interaction with SF3B5" evidence="9">
    <location>
        <position position="916"/>
    </location>
</feature>
<feature type="site" description="Interaction with SF3B1" evidence="9">
    <location>
        <position position="988"/>
    </location>
</feature>
<feature type="site" description="Interaction with SF3B1" evidence="9">
    <location>
        <position position="1171"/>
    </location>
</feature>
<feature type="modified residue" description="Phosphoserine" evidence="25">
    <location>
        <position position="156"/>
    </location>
</feature>
<feature type="modified residue" description="Phosphothreonine" evidence="25">
    <location>
        <position position="1200"/>
    </location>
</feature>
<feature type="splice variant" id="VSP_022977" description="In isoform 3." evidence="17">
    <location>
        <begin position="1"/>
        <end position="818"/>
    </location>
</feature>
<feature type="splice variant" id="VSP_022978" description="In isoform 2." evidence="17">
    <original>ICSENYITYKNFGDQPDIRCPIPRRR</original>
    <variation>NLSPPFPKAIPALICLDSPVYFCTHP</variation>
    <location>
        <begin position="250"/>
        <end position="275"/>
    </location>
</feature>
<feature type="splice variant" id="VSP_022979" description="In isoform 2." evidence="17">
    <location>
        <begin position="276"/>
        <end position="1217"/>
    </location>
</feature>
<feature type="sequence variant" id="VAR_053647" description="In dbSNP:rs11551673.">
    <original>G</original>
    <variation>R</variation>
    <location>
        <position position="908"/>
    </location>
</feature>
<feature type="sequence conflict" description="In Ref. 1; CAB56791." evidence="18" ref="1">
    <original>D</original>
    <variation>G</variation>
    <location>
        <position position="193"/>
    </location>
</feature>
<feature type="sequence conflict" description="In Ref. 4; AAH68974." evidence="18" ref="4">
    <original>F</original>
    <variation>S</variation>
    <location>
        <position position="301"/>
    </location>
</feature>
<feature type="sequence conflict" description="In Ref. 1; CAB56791." evidence="18" ref="1">
    <original>L</original>
    <variation>W</variation>
    <location>
        <position position="302"/>
    </location>
</feature>
<feature type="sequence conflict" description="In Ref. 4; AAH00463/AAH03146." evidence="18" ref="4">
    <original>T</original>
    <variation>I</variation>
    <location>
        <position position="899"/>
    </location>
</feature>
<feature type="strand" evidence="35">
    <location>
        <begin position="3"/>
        <end position="9"/>
    </location>
</feature>
<feature type="strand" evidence="35">
    <location>
        <begin position="15"/>
        <end position="20"/>
    </location>
</feature>
<feature type="strand" evidence="35">
    <location>
        <begin position="24"/>
        <end position="26"/>
    </location>
</feature>
<feature type="strand" evidence="35">
    <location>
        <begin position="29"/>
        <end position="33"/>
    </location>
</feature>
<feature type="strand" evidence="35">
    <location>
        <begin position="35"/>
        <end position="44"/>
    </location>
</feature>
<feature type="turn" evidence="35">
    <location>
        <begin position="45"/>
        <end position="48"/>
    </location>
</feature>
<feature type="strand" evidence="35">
    <location>
        <begin position="49"/>
        <end position="57"/>
    </location>
</feature>
<feature type="strand" evidence="35">
    <location>
        <begin position="62"/>
        <end position="68"/>
    </location>
</feature>
<feature type="strand" evidence="35">
    <location>
        <begin position="77"/>
        <end position="82"/>
    </location>
</feature>
<feature type="strand" evidence="35">
    <location>
        <begin position="85"/>
        <end position="93"/>
    </location>
</feature>
<feature type="turn" evidence="35">
    <location>
        <begin position="94"/>
        <end position="97"/>
    </location>
</feature>
<feature type="strand" evidence="35">
    <location>
        <begin position="98"/>
        <end position="106"/>
    </location>
</feature>
<feature type="strand" evidence="35">
    <location>
        <begin position="110"/>
        <end position="112"/>
    </location>
</feature>
<feature type="strand" evidence="35">
    <location>
        <begin position="114"/>
        <end position="117"/>
    </location>
</feature>
<feature type="strand" evidence="35">
    <location>
        <begin position="119"/>
        <end position="123"/>
    </location>
</feature>
<feature type="strand" evidence="35">
    <location>
        <begin position="127"/>
        <end position="133"/>
    </location>
</feature>
<feature type="strand" evidence="35">
    <location>
        <begin position="135"/>
        <end position="137"/>
    </location>
</feature>
<feature type="strand" evidence="35">
    <location>
        <begin position="139"/>
        <end position="146"/>
    </location>
</feature>
<feature type="turn" evidence="26">
    <location>
        <begin position="148"/>
        <end position="150"/>
    </location>
</feature>
<feature type="strand" evidence="35">
    <location>
        <begin position="152"/>
        <end position="154"/>
    </location>
</feature>
<feature type="strand" evidence="30">
    <location>
        <begin position="158"/>
        <end position="160"/>
    </location>
</feature>
<feature type="strand" evidence="35">
    <location>
        <begin position="165"/>
        <end position="173"/>
    </location>
</feature>
<feature type="strand" evidence="32">
    <location>
        <begin position="176"/>
        <end position="179"/>
    </location>
</feature>
<feature type="strand" evidence="35">
    <location>
        <begin position="181"/>
        <end position="188"/>
    </location>
</feature>
<feature type="helix" evidence="35">
    <location>
        <begin position="191"/>
        <end position="193"/>
    </location>
</feature>
<feature type="strand" evidence="34">
    <location>
        <begin position="196"/>
        <end position="198"/>
    </location>
</feature>
<feature type="helix" evidence="35">
    <location>
        <begin position="199"/>
        <end position="203"/>
    </location>
</feature>
<feature type="strand" evidence="35">
    <location>
        <begin position="207"/>
        <end position="214"/>
    </location>
</feature>
<feature type="turn" evidence="35">
    <location>
        <begin position="215"/>
        <end position="218"/>
    </location>
</feature>
<feature type="strand" evidence="35">
    <location>
        <begin position="219"/>
        <end position="227"/>
    </location>
</feature>
<feature type="strand" evidence="35">
    <location>
        <begin position="232"/>
        <end position="237"/>
    </location>
</feature>
<feature type="turn" evidence="34">
    <location>
        <begin position="241"/>
        <end position="243"/>
    </location>
</feature>
<feature type="strand" evidence="35">
    <location>
        <begin position="248"/>
        <end position="252"/>
    </location>
</feature>
<feature type="strand" evidence="35">
    <location>
        <begin position="255"/>
        <end position="259"/>
    </location>
</feature>
<feature type="strand" evidence="35">
    <location>
        <begin position="261"/>
        <end position="263"/>
    </location>
</feature>
<feature type="strand" evidence="35">
    <location>
        <begin position="267"/>
        <end position="270"/>
    </location>
</feature>
<feature type="strand" evidence="30">
    <location>
        <begin position="273"/>
        <end position="276"/>
    </location>
</feature>
<feature type="strand" evidence="35">
    <location>
        <begin position="287"/>
        <end position="294"/>
    </location>
</feature>
<feature type="strand" evidence="35">
    <location>
        <begin position="299"/>
        <end position="305"/>
    </location>
</feature>
<feature type="strand" evidence="35">
    <location>
        <begin position="308"/>
        <end position="318"/>
    </location>
</feature>
<feature type="strand" evidence="35">
    <location>
        <begin position="321"/>
        <end position="332"/>
    </location>
</feature>
<feature type="strand" evidence="35">
    <location>
        <begin position="336"/>
        <end position="342"/>
    </location>
</feature>
<feature type="turn" evidence="35">
    <location>
        <begin position="343"/>
        <end position="345"/>
    </location>
</feature>
<feature type="strand" evidence="35">
    <location>
        <begin position="346"/>
        <end position="354"/>
    </location>
</feature>
<feature type="strand" evidence="35">
    <location>
        <begin position="356"/>
        <end position="361"/>
    </location>
</feature>
<feature type="strand" evidence="28">
    <location>
        <begin position="365"/>
        <end position="367"/>
    </location>
</feature>
<feature type="strand" evidence="34">
    <location>
        <begin position="368"/>
        <end position="370"/>
    </location>
</feature>
<feature type="strand" evidence="35">
    <location>
        <begin position="372"/>
        <end position="374"/>
    </location>
</feature>
<feature type="strand" evidence="27">
    <location>
        <begin position="375"/>
        <end position="377"/>
    </location>
</feature>
<feature type="strand" evidence="35">
    <location>
        <begin position="393"/>
        <end position="401"/>
    </location>
</feature>
<feature type="strand" evidence="35">
    <location>
        <begin position="409"/>
        <end position="413"/>
    </location>
</feature>
<feature type="strand" evidence="32">
    <location>
        <begin position="416"/>
        <end position="420"/>
    </location>
</feature>
<feature type="strand" evidence="35">
    <location>
        <begin position="422"/>
        <end position="427"/>
    </location>
</feature>
<feature type="helix" evidence="35">
    <location>
        <begin position="430"/>
        <end position="432"/>
    </location>
</feature>
<feature type="strand" evidence="35">
    <location>
        <begin position="434"/>
        <end position="442"/>
    </location>
</feature>
<feature type="strand" evidence="35">
    <location>
        <begin position="444"/>
        <end position="451"/>
    </location>
</feature>
<feature type="strand" evidence="35">
    <location>
        <begin position="456"/>
        <end position="462"/>
    </location>
</feature>
<feature type="strand" evidence="32">
    <location>
        <begin position="464"/>
        <end position="467"/>
    </location>
</feature>
<feature type="strand" evidence="35">
    <location>
        <begin position="473"/>
        <end position="478"/>
    </location>
</feature>
<feature type="strand" evidence="35">
    <location>
        <begin position="481"/>
        <end position="485"/>
    </location>
</feature>
<feature type="strand" evidence="34">
    <location>
        <begin position="488"/>
        <end position="490"/>
    </location>
</feature>
<feature type="strand" evidence="34">
    <location>
        <begin position="492"/>
        <end position="497"/>
    </location>
</feature>
<feature type="strand" evidence="30">
    <location>
        <begin position="501"/>
        <end position="503"/>
    </location>
</feature>
<feature type="strand" evidence="35">
    <location>
        <begin position="506"/>
        <end position="512"/>
    </location>
</feature>
<feature type="strand" evidence="35">
    <location>
        <begin position="515"/>
        <end position="520"/>
    </location>
</feature>
<feature type="strand" evidence="35">
    <location>
        <begin position="523"/>
        <end position="531"/>
    </location>
</feature>
<feature type="strand" evidence="35">
    <location>
        <begin position="533"/>
        <end position="537"/>
    </location>
</feature>
<feature type="strand" evidence="30">
    <location>
        <begin position="539"/>
        <end position="541"/>
    </location>
</feature>
<feature type="strand" evidence="35">
    <location>
        <begin position="544"/>
        <end position="550"/>
    </location>
</feature>
<feature type="strand" evidence="35">
    <location>
        <begin position="553"/>
        <end position="558"/>
    </location>
</feature>
<feature type="strand" evidence="35">
    <location>
        <begin position="561"/>
        <end position="569"/>
    </location>
</feature>
<feature type="turn" evidence="35">
    <location>
        <begin position="570"/>
        <end position="572"/>
    </location>
</feature>
<feature type="strand" evidence="35">
    <location>
        <begin position="573"/>
        <end position="576"/>
    </location>
</feature>
<feature type="strand" evidence="35">
    <location>
        <begin position="587"/>
        <end position="592"/>
    </location>
</feature>
<feature type="strand" evidence="34">
    <location>
        <begin position="597"/>
        <end position="600"/>
    </location>
</feature>
<feature type="strand" evidence="35">
    <location>
        <begin position="604"/>
        <end position="609"/>
    </location>
</feature>
<feature type="strand" evidence="35">
    <location>
        <begin position="612"/>
        <end position="618"/>
    </location>
</feature>
<feature type="strand" evidence="32">
    <location>
        <begin position="620"/>
        <end position="623"/>
    </location>
</feature>
<feature type="strand" evidence="35">
    <location>
        <begin position="627"/>
        <end position="632"/>
    </location>
</feature>
<feature type="strand" evidence="35">
    <location>
        <begin position="637"/>
        <end position="644"/>
    </location>
</feature>
<feature type="strand" evidence="35">
    <location>
        <begin position="663"/>
        <end position="678"/>
    </location>
</feature>
<feature type="strand" evidence="35">
    <location>
        <begin position="680"/>
        <end position="682"/>
    </location>
</feature>
<feature type="strand" evidence="35">
    <location>
        <begin position="686"/>
        <end position="690"/>
    </location>
</feature>
<feature type="strand" evidence="35">
    <location>
        <begin position="701"/>
        <end position="706"/>
    </location>
</feature>
<feature type="strand" evidence="35">
    <location>
        <begin position="709"/>
        <end position="714"/>
    </location>
</feature>
<feature type="strand" evidence="37">
    <location>
        <begin position="716"/>
        <end position="718"/>
    </location>
</feature>
<feature type="strand" evidence="35">
    <location>
        <begin position="720"/>
        <end position="725"/>
    </location>
</feature>
<feature type="strand" evidence="35">
    <location>
        <begin position="728"/>
        <end position="736"/>
    </location>
</feature>
<feature type="strand" evidence="35">
    <location>
        <begin position="740"/>
        <end position="745"/>
    </location>
</feature>
<feature type="strand" evidence="31">
    <location>
        <begin position="747"/>
        <end position="749"/>
    </location>
</feature>
<feature type="strand" evidence="35">
    <location>
        <begin position="751"/>
        <end position="758"/>
    </location>
</feature>
<feature type="strand" evidence="35">
    <location>
        <begin position="761"/>
        <end position="767"/>
    </location>
</feature>
<feature type="strand" evidence="35">
    <location>
        <begin position="773"/>
        <end position="780"/>
    </location>
</feature>
<feature type="strand" evidence="35">
    <location>
        <begin position="785"/>
        <end position="790"/>
    </location>
</feature>
<feature type="turn" evidence="35">
    <location>
        <begin position="792"/>
        <end position="794"/>
    </location>
</feature>
<feature type="strand" evidence="35">
    <location>
        <begin position="797"/>
        <end position="806"/>
    </location>
</feature>
<feature type="helix" evidence="35">
    <location>
        <begin position="809"/>
        <end position="825"/>
    </location>
</feature>
<feature type="helix" evidence="35">
    <location>
        <begin position="831"/>
        <end position="844"/>
    </location>
</feature>
<feature type="helix" evidence="35">
    <location>
        <begin position="849"/>
        <end position="852"/>
    </location>
</feature>
<feature type="turn" evidence="26">
    <location>
        <begin position="858"/>
        <end position="860"/>
    </location>
</feature>
<feature type="strand" evidence="35">
    <location>
        <begin position="862"/>
        <end position="869"/>
    </location>
</feature>
<feature type="strand" evidence="35">
    <location>
        <begin position="871"/>
        <end position="873"/>
    </location>
</feature>
<feature type="strand" evidence="35">
    <location>
        <begin position="876"/>
        <end position="881"/>
    </location>
</feature>
<feature type="strand" evidence="35">
    <location>
        <begin position="886"/>
        <end position="894"/>
    </location>
</feature>
<feature type="turn" evidence="35">
    <location>
        <begin position="897"/>
        <end position="901"/>
    </location>
</feature>
<feature type="strand" evidence="35">
    <location>
        <begin position="903"/>
        <end position="912"/>
    </location>
</feature>
<feature type="turn" evidence="35">
    <location>
        <begin position="915"/>
        <end position="918"/>
    </location>
</feature>
<feature type="strand" evidence="35">
    <location>
        <begin position="923"/>
        <end position="931"/>
    </location>
</feature>
<feature type="turn" evidence="35">
    <location>
        <begin position="932"/>
        <end position="935"/>
    </location>
</feature>
<feature type="strand" evidence="35">
    <location>
        <begin position="936"/>
        <end position="947"/>
    </location>
</feature>
<feature type="strand" evidence="35">
    <location>
        <begin position="949"/>
        <end position="955"/>
    </location>
</feature>
<feature type="strand" evidence="35">
    <location>
        <begin position="958"/>
        <end position="963"/>
    </location>
</feature>
<feature type="strand" evidence="35">
    <location>
        <begin position="966"/>
        <end position="971"/>
    </location>
</feature>
<feature type="strand" evidence="35">
    <location>
        <begin position="974"/>
        <end position="976"/>
    </location>
</feature>
<feature type="strand" evidence="35">
    <location>
        <begin position="978"/>
        <end position="983"/>
    </location>
</feature>
<feature type="strand" evidence="37">
    <location>
        <begin position="986"/>
        <end position="988"/>
    </location>
</feature>
<feature type="strand" evidence="35">
    <location>
        <begin position="990"/>
        <end position="996"/>
    </location>
</feature>
<feature type="strand" evidence="35">
    <location>
        <begin position="999"/>
        <end position="1007"/>
    </location>
</feature>
<feature type="strand" evidence="35">
    <location>
        <begin position="1009"/>
        <end position="1015"/>
    </location>
</feature>
<feature type="turn" evidence="35">
    <location>
        <begin position="1016"/>
        <end position="1019"/>
    </location>
</feature>
<feature type="strand" evidence="35">
    <location>
        <begin position="1020"/>
        <end position="1026"/>
    </location>
</feature>
<feature type="strand" evidence="32">
    <location>
        <begin position="1028"/>
        <end position="1030"/>
    </location>
</feature>
<feature type="strand" evidence="35">
    <location>
        <begin position="1033"/>
        <end position="1040"/>
    </location>
</feature>
<feature type="strand" evidence="35">
    <location>
        <begin position="1043"/>
        <end position="1048"/>
    </location>
</feature>
<feature type="strand" evidence="35">
    <location>
        <begin position="1051"/>
        <end position="1057"/>
    </location>
</feature>
<feature type="strand" evidence="29">
    <location>
        <begin position="1064"/>
        <end position="1067"/>
    </location>
</feature>
<feature type="strand" evidence="36">
    <location>
        <begin position="1070"/>
        <end position="1072"/>
    </location>
</feature>
<feature type="helix" evidence="36">
    <location>
        <begin position="1074"/>
        <end position="1077"/>
    </location>
</feature>
<feature type="strand" evidence="32">
    <location>
        <begin position="1082"/>
        <end position="1084"/>
    </location>
</feature>
<feature type="strand" evidence="35">
    <location>
        <begin position="1086"/>
        <end position="1088"/>
    </location>
</feature>
<feature type="strand" evidence="35">
    <location>
        <begin position="1090"/>
        <end position="1096"/>
    </location>
</feature>
<feature type="strand" evidence="35">
    <location>
        <begin position="1101"/>
        <end position="1107"/>
    </location>
</feature>
<feature type="strand" evidence="33">
    <location>
        <begin position="1109"/>
        <end position="1113"/>
    </location>
</feature>
<feature type="strand" evidence="35">
    <location>
        <begin position="1116"/>
        <end position="1121"/>
    </location>
</feature>
<feature type="strand" evidence="35">
    <location>
        <begin position="1126"/>
        <end position="1131"/>
    </location>
</feature>
<feature type="helix" evidence="35">
    <location>
        <begin position="1135"/>
        <end position="1151"/>
    </location>
</feature>
<feature type="strand" evidence="37">
    <location>
        <begin position="1155"/>
        <end position="1158"/>
    </location>
</feature>
<feature type="helix" evidence="35">
    <location>
        <begin position="1160"/>
        <end position="1164"/>
    </location>
</feature>
<feature type="strand" evidence="35">
    <location>
        <begin position="1166"/>
        <end position="1168"/>
    </location>
</feature>
<feature type="strand" evidence="35">
    <location>
        <begin position="1171"/>
        <end position="1175"/>
    </location>
</feature>
<feature type="helix" evidence="35">
    <location>
        <begin position="1176"/>
        <end position="1179"/>
    </location>
</feature>
<feature type="helix" evidence="35">
    <location>
        <begin position="1180"/>
        <end position="1184"/>
    </location>
</feature>
<feature type="helix" evidence="35">
    <location>
        <begin position="1187"/>
        <end position="1196"/>
    </location>
</feature>
<feature type="helix" evidence="35">
    <location>
        <begin position="1201"/>
        <end position="1214"/>
    </location>
</feature>
<reference key="1">
    <citation type="journal article" date="1999" name="Mol. Cell. Biol.">
        <title>Characterization of a protein complex containing spliceosomal proteins saps 49,130,145 and 155.</title>
        <authorList>
            <person name="Das B.K."/>
            <person name="Xia L."/>
            <person name="Palandjian L."/>
            <person name="Gozani O."/>
            <person name="Chyung Y."/>
            <person name="Reed R."/>
        </authorList>
    </citation>
    <scope>NUCLEOTIDE SEQUENCE [MRNA] (ISOFORM 1)</scope>
    <scope>PROTEIN SEQUENCE OF 1192-1217</scope>
    <scope>FUNCTION</scope>
    <scope>SUBCELLULAR LOCATION</scope>
    <scope>SUBUNIT</scope>
</reference>
<reference key="2">
    <citation type="journal article" date="1994" name="DNA Res.">
        <title>Prediction of the coding sequences of unidentified human genes. I. The coding sequences of 40 new genes (KIAA0001-KIAA0040) deduced by analysis of randomly sampled cDNA clones from human immature myeloid cell line KG-1.</title>
        <authorList>
            <person name="Nomura N."/>
            <person name="Miyajima N."/>
            <person name="Sazuka T."/>
            <person name="Tanaka A."/>
            <person name="Kawarabayasi Y."/>
            <person name="Sato S."/>
            <person name="Nagase T."/>
            <person name="Seki N."/>
            <person name="Ishikawa K."/>
            <person name="Tabata S."/>
        </authorList>
    </citation>
    <scope>NUCLEOTIDE SEQUENCE [LARGE SCALE MRNA] (ISOFORM 1)</scope>
    <source>
        <tissue>Bone marrow</tissue>
    </source>
</reference>
<reference key="3">
    <citation type="submission" date="1996-09" db="EMBL/GenBank/DDBJ databases">
        <authorList>
            <person name="Nomura N."/>
        </authorList>
    </citation>
    <scope>SEQUENCE REVISION</scope>
</reference>
<reference key="4">
    <citation type="journal article" date="2004" name="Genome Res.">
        <title>The status, quality, and expansion of the NIH full-length cDNA project: the Mammalian Gene Collection (MGC).</title>
        <authorList>
            <consortium name="The MGC Project Team"/>
        </authorList>
    </citation>
    <scope>NUCLEOTIDE SEQUENCE [LARGE SCALE MRNA] (ISOFORMS 1; 2 AND 3)</scope>
    <source>
        <tissue>Lung</tissue>
        <tissue>Skeletal muscle</tissue>
        <tissue>Skin</tissue>
    </source>
</reference>
<reference key="5">
    <citation type="journal article" date="2007" name="BMC Genomics">
        <title>The full-ORF clone resource of the German cDNA consortium.</title>
        <authorList>
            <person name="Bechtel S."/>
            <person name="Rosenfelder H."/>
            <person name="Duda A."/>
            <person name="Schmidt C.P."/>
            <person name="Ernst U."/>
            <person name="Wellenreuther R."/>
            <person name="Mehrle A."/>
            <person name="Schuster C."/>
            <person name="Bahr A."/>
            <person name="Bloecker H."/>
            <person name="Heubner D."/>
            <person name="Hoerlein A."/>
            <person name="Michel G."/>
            <person name="Wedler H."/>
            <person name="Koehrer K."/>
            <person name="Ottenwaelder B."/>
            <person name="Poustka A."/>
            <person name="Wiemann S."/>
            <person name="Schupp I."/>
        </authorList>
    </citation>
    <scope>NUCLEOTIDE SEQUENCE [LARGE SCALE MRNA] OF 1003-1217 (ISOFORM 1)</scope>
    <source>
        <tissue>Testis</tissue>
    </source>
</reference>
<reference key="6">
    <citation type="journal article" date="2000" name="Mol. Cell">
        <title>Functional association of U2 snRNP with the ATP-independent spliceosomal complex E.</title>
        <authorList>
            <person name="Das R."/>
            <person name="Zhou Z."/>
            <person name="Reed R."/>
        </authorList>
    </citation>
    <scope>CHARACTERIZATION OF THE SPLICEOSOME</scope>
    <scope>FUNCTION</scope>
    <scope>SUBUNIT</scope>
</reference>
<reference key="7">
    <citation type="journal article" date="2001" name="Mol. Cell. Biol.">
        <title>Human STAGA complex is a chromatin-acetylating transcription coactivator that interacts with pre-mRNA splicing and DNA damage-binding factors in vivo.</title>
        <authorList>
            <person name="Martinez E."/>
            <person name="Palhan V.B."/>
            <person name="Tjernberg A."/>
            <person name="Lymar E.S."/>
            <person name="Gamper A.M."/>
            <person name="Kundu T.K."/>
            <person name="Chait B.T."/>
            <person name="Roeder R.G."/>
        </authorList>
    </citation>
    <scope>SUBCELLULAR LOCATION</scope>
    <scope>INTERACTION WITH SUPT3H</scope>
    <scope>INTERACTION WITH THE STAGA COMPLEX</scope>
    <scope>IDENTIFICATION BY MASS SPECTROMETRY</scope>
</reference>
<reference key="8">
    <citation type="journal article" date="2001" name="Mol. Cell. Biol.">
        <title>The TFIID components human TAFII140 and Drosophila BIP2 (TAFII155) are novel metazoan homologues of yeast TAFII47 containing a histone fold and a PHD finger.</title>
        <authorList>
            <person name="Gangloff Y.G."/>
            <person name="Pointud J.-C."/>
            <person name="Thuault S."/>
            <person name="Carre L."/>
            <person name="Romier C."/>
            <person name="Muratoglu S."/>
            <person name="Brand M."/>
            <person name="Tora L."/>
            <person name="Couderc J.-L."/>
            <person name="Davidson I."/>
        </authorList>
    </citation>
    <scope>INTERACTION WITH TAF3</scope>
</reference>
<reference key="9">
    <citation type="journal article" date="2002" name="EMBO J.">
        <title>Characterization of novel SF3b and 17S U2 snRNP proteins, including a human Prp5p homologue and an SF3b DEAD-box protein.</title>
        <authorList>
            <person name="Will C.L."/>
            <person name="Urlaub H."/>
            <person name="Achsel T."/>
            <person name="Gentzel M."/>
            <person name="Wilm M."/>
            <person name="Luehrmann R."/>
        </authorList>
    </citation>
    <scope>IDENTIFICATION IN THE SF3B COMPLEX</scope>
</reference>
<reference key="10">
    <citation type="journal article" date="2002" name="RNA">
        <title>Purification and characterization of native spliceosomes suitable for three-dimensional structural analysis.</title>
        <authorList>
            <person name="Jurica M.S."/>
            <person name="Licklider L.J."/>
            <person name="Gygi S.P."/>
            <person name="Grigorieff N."/>
            <person name="Moore M.J."/>
        </authorList>
    </citation>
    <scope>IDENTIFICATION BY MASS SPECTROMETRY</scope>
    <scope>IDENTIFICATION IN THE SPLICEOSOMAL C COMPLEX</scope>
</reference>
<reference key="11">
    <citation type="journal article" date="2003" name="Science">
        <title>Molecular architecture of the multiprotein splicing factor SF3b.</title>
        <authorList>
            <person name="Golas M.M."/>
            <person name="Sander B."/>
            <person name="Will C.L."/>
            <person name="Luhrmann R."/>
            <person name="Stark H."/>
        </authorList>
    </citation>
    <scope>IDENTIFICATION IN THE SF3B COMPLEX</scope>
    <scope>ELECTRON MICROSCOPY OF THE SF3B COMPLEX</scope>
</reference>
<reference key="12">
    <citation type="journal article" date="2004" name="RNA">
        <title>The human 18S U11/U12 snRNP contains a set of novel proteins not found in the U2-dependent spliceosome.</title>
        <authorList>
            <person name="Will C.L."/>
            <person name="Schneider C."/>
            <person name="Hossbach M."/>
            <person name="Urlaub H."/>
            <person name="Rauhut R."/>
            <person name="Elbashir S."/>
            <person name="Tuschl T."/>
            <person name="Luehrmann R."/>
        </authorList>
    </citation>
    <scope>IDENTIFICATION IN A COMPLEX WITH THE U11/U12 SPLICEOSOME</scope>
    <scope>FUNCTION</scope>
    <scope>IDENTIFICATION BY MASS SPECTROMETRY</scope>
</reference>
<reference key="13">
    <citation type="journal article" date="2011" name="BMC Syst. Biol.">
        <title>Initial characterization of the human central proteome.</title>
        <authorList>
            <person name="Burkard T.R."/>
            <person name="Planyavsky M."/>
            <person name="Kaupe I."/>
            <person name="Breitwieser F.P."/>
            <person name="Buerckstuemmer T."/>
            <person name="Bennett K.L."/>
            <person name="Superti-Furga G."/>
            <person name="Colinge J."/>
        </authorList>
    </citation>
    <scope>IDENTIFICATION BY MASS SPECTROMETRY [LARGE SCALE ANALYSIS]</scope>
</reference>
<reference key="14">
    <citation type="journal article" date="2012" name="Mol. Cell. Proteomics">
        <title>Comparative large-scale characterisation of plant vs. mammal proteins reveals similar and idiosyncratic N-alpha acetylation features.</title>
        <authorList>
            <person name="Bienvenut W.V."/>
            <person name="Sumpton D."/>
            <person name="Martinez A."/>
            <person name="Lilla S."/>
            <person name="Espagne C."/>
            <person name="Meinnel T."/>
            <person name="Giglione C."/>
        </authorList>
    </citation>
    <scope>IDENTIFICATION BY MASS SPECTROMETRY [LARGE SCALE ANALYSIS]</scope>
</reference>
<reference key="15">
    <citation type="journal article" date="2012" name="Proc. Natl. Acad. Sci. U.S.A.">
        <title>N-terminal acetylome analyses and functional insights of the N-terminal acetyltransferase NatB.</title>
        <authorList>
            <person name="Van Damme P."/>
            <person name="Lasa M."/>
            <person name="Polevoda B."/>
            <person name="Gazquez C."/>
            <person name="Elosegui-Artola A."/>
            <person name="Kim D.S."/>
            <person name="De Juan-Pardo E."/>
            <person name="Demeyer K."/>
            <person name="Hole K."/>
            <person name="Larrea E."/>
            <person name="Timmerman E."/>
            <person name="Prieto J."/>
            <person name="Arnesen T."/>
            <person name="Sherman F."/>
            <person name="Gevaert K."/>
            <person name="Aldabe R."/>
        </authorList>
    </citation>
    <scope>IDENTIFICATION BY MASS SPECTROMETRY [LARGE SCALE ANALYSIS]</scope>
</reference>
<reference key="16">
    <citation type="journal article" date="2013" name="J. Proteome Res.">
        <title>Toward a comprehensive characterization of a human cancer cell phosphoproteome.</title>
        <authorList>
            <person name="Zhou H."/>
            <person name="Di Palma S."/>
            <person name="Preisinger C."/>
            <person name="Peng M."/>
            <person name="Polat A.N."/>
            <person name="Heck A.J."/>
            <person name="Mohammed S."/>
        </authorList>
    </citation>
    <scope>PHOSPHORYLATION [LARGE SCALE ANALYSIS] AT SER-156 AND THR-1200</scope>
    <scope>IDENTIFICATION BY MASS SPECTROMETRY [LARGE SCALE ANALYSIS]</scope>
    <source>
        <tissue>Cervix carcinoma</tissue>
        <tissue>Erythroleukemia</tissue>
    </source>
</reference>
<reference key="17">
    <citation type="journal article" date="2014" name="J. Proteomics">
        <title>An enzyme assisted RP-RPLC approach for in-depth analysis of human liver phosphoproteome.</title>
        <authorList>
            <person name="Bian Y."/>
            <person name="Song C."/>
            <person name="Cheng K."/>
            <person name="Dong M."/>
            <person name="Wang F."/>
            <person name="Huang J."/>
            <person name="Sun D."/>
            <person name="Wang L."/>
            <person name="Ye M."/>
            <person name="Zou H."/>
        </authorList>
    </citation>
    <scope>IDENTIFICATION BY MASS SPECTROMETRY [LARGE SCALE ANALYSIS]</scope>
    <source>
        <tissue>Liver</tissue>
    </source>
</reference>
<reference key="18">
    <citation type="journal article" date="2017" name="Nat. Commun.">
        <title>Splicing modulators act at the branch point adenosine binding pocket defined by the PHF5A-SF3b complex.</title>
        <authorList>
            <person name="Teng T."/>
            <person name="Tsai J.H."/>
            <person name="Puyang X."/>
            <person name="Seiler M."/>
            <person name="Peng S."/>
            <person name="Prajapati S."/>
            <person name="Aird D."/>
            <person name="Buonamici S."/>
            <person name="Caleb B."/>
            <person name="Chan B."/>
            <person name="Corson L."/>
            <person name="Feala J."/>
            <person name="Fekkes P."/>
            <person name="Gerard B."/>
            <person name="Karr C."/>
            <person name="Korpal M."/>
            <person name="Liu X."/>
            <person name="Lowe J.T."/>
            <person name="Mizui Y."/>
            <person name="Palacino J."/>
            <person name="Park E."/>
            <person name="Smith P.G."/>
            <person name="Subramanian V."/>
            <person name="Wu Z.J."/>
            <person name="Zou J."/>
            <person name="Yu L."/>
            <person name="Chicas A."/>
            <person name="Warmuth M."/>
            <person name="Larsen N."/>
            <person name="Zhu P."/>
        </authorList>
    </citation>
    <scope>IDENTIFICATION BY MASS SPECTROMETRY</scope>
    <scope>IDENTIFICATION IN THE SF3B COMPLEX</scope>
    <scope>SUBCELLULAR LOCATION</scope>
</reference>
<reference key="19">
    <citation type="journal article" date="2016" name="Mol. Cell">
        <title>Molecular architecture of SF3b and structural consequences of its cancer-related mutations.</title>
        <authorList>
            <person name="Cretu C."/>
            <person name="Schmitzova J."/>
            <person name="Ponce-Salvatierra A."/>
            <person name="Dybkov O."/>
            <person name="De Laurentiis E.I."/>
            <person name="Sharma K."/>
            <person name="Will C.L."/>
            <person name="Urlaub H."/>
            <person name="Luehrmann R."/>
            <person name="Pena V."/>
        </authorList>
    </citation>
    <scope>X-RAY CRYSTALLOGRAPHY (3.10 ANGSTROMS) IN COMPLEX WITH SF3B1; SF3B5 AND PHF5A</scope>
    <scope>FUNCTION</scope>
    <scope>INTERACTION WITH SF3B1; SF3B5 AND PHF5A</scope>
    <scope>IDENTIFICATION IN THE SF3B COMPLEX</scope>
    <scope>SUBUNIT</scope>
    <scope>SUBCELLULAR LOCATION</scope>
    <scope>DOMAIN</scope>
</reference>
<reference evidence="19" key="20">
    <citation type="journal article" date="2017" name="Cell">
        <title>Cryo-EM Structure of a Pre-catalytic Human Spliceosome Primed for Activation.</title>
        <authorList>
            <person name="Bertram K."/>
            <person name="Agafonov D.E."/>
            <person name="Dybkov O."/>
            <person name="Haselbach D."/>
            <person name="Leelaram M.N."/>
            <person name="Will C.L."/>
            <person name="Urlaub H."/>
            <person name="Kastner B."/>
            <person name="Luhrmann R."/>
            <person name="Stark H."/>
        </authorList>
    </citation>
    <scope>STRUCTURE BY ELECTRON MICROSCOPY (4.50 ANGSTROMS)</scope>
    <scope>FUNCTION</scope>
    <scope>SUBUNIT</scope>
    <scope>SUBCELLULAR LOCATION</scope>
    <scope>IDENTIFICATION BY MASS SPECTROMETRY</scope>
</reference>
<reference evidence="20 21" key="21">
    <citation type="journal article" date="2020" name="Nature">
        <title>Molecular architecture of the human 17S U2 snRNP.</title>
        <authorList>
            <person name="Zhang Z."/>
            <person name="Will C.L."/>
            <person name="Bertram K."/>
            <person name="Dybkov O."/>
            <person name="Hartmuth K."/>
            <person name="Agafonov D.E."/>
            <person name="Hofele R."/>
            <person name="Urlaub H."/>
            <person name="Kastner B."/>
            <person name="Luehrmann R."/>
            <person name="Stark H."/>
        </authorList>
    </citation>
    <scope>STRUCTURE BY ELECTRON MICROSCOPY (4.10 ANGSTROMS) IN COMPLEX WITH THE 17S U2 SNRNP COMPLEX</scope>
    <scope>FUNCTION</scope>
    <scope>IDENTIFICATION IN THE 17S U2 SNRNP COMPLEX</scope>
</reference>
<reference evidence="22" key="22">
    <citation type="journal article" date="2021" name="Science">
        <title>Structure of the activated human minor spliceosome.</title>
        <authorList>
            <person name="Bai R."/>
            <person name="Wan R."/>
            <person name="Wang L."/>
            <person name="Xu K."/>
            <person name="Zhang Q."/>
            <person name="Lei J."/>
            <person name="Shi Y."/>
        </authorList>
    </citation>
    <scope>STRUCTURE BY ELECTRON MICROSCOPY (2.89 ANGSTROMS)</scope>
    <scope>FUNCTION</scope>
    <scope>SUBUNIT</scope>
</reference>
<reference evidence="23" key="23">
    <citation type="journal article" date="2022" name="Science">
        <title>Structural basis of branch site recognition by the human spliceosome.</title>
        <authorList>
            <person name="Tholen J."/>
            <person name="Razew M."/>
            <person name="Weis F."/>
            <person name="Galej W.P."/>
        </authorList>
    </citation>
    <scope>STRUCTURE BY ELECTRON MICROSCOPY (2.30 ANGSTROMS) IN COMPLEX WITH THE 17S U2 SNRNP COMPLEX</scope>
    <scope>FUNCTION</scope>
    <scope>IDENTIFICATION IN THE 17S U2 SNRNP COMPLEX</scope>
</reference>
<reference evidence="24" key="24">
    <citation type="journal article" date="2023" name="Nat. Commun.">
        <title>Mechanisms of the RNA helicases DDX42 and DDX46 in human U2 snRNP assembly.</title>
        <authorList>
            <person name="Yang F."/>
            <person name="Bian T."/>
            <person name="Zhan X."/>
            <person name="Chen Z."/>
            <person name="Xing Z."/>
            <person name="Larsen N.A."/>
            <person name="Zhang X."/>
            <person name="Shi Y."/>
        </authorList>
    </citation>
    <scope>STRUCTURE BY ELECTRON MICROSCOPY (2.70 ANGSTROMS) IN COMPLEX WITH THE 17S U2 SNRNP COMPLEX</scope>
    <scope>IDENTIFICATION IN THE 17S U2 SNRNP COMPLEX</scope>
</reference>
<name>SF3B3_HUMAN</name>
<protein>
    <recommendedName>
        <fullName>Splicing factor 3B subunit 3</fullName>
    </recommendedName>
    <alternativeName>
        <fullName>Pre-mRNA-splicing factor SF3b 130 kDa subunit</fullName>
        <shortName>SF3b130</shortName>
    </alternativeName>
    <alternativeName>
        <fullName>STAF130</fullName>
    </alternativeName>
    <alternativeName>
        <fullName>Spliceosome-associated protein 130</fullName>
        <shortName evidence="16">SAP 130</shortName>
    </alternativeName>
</protein>
<dbReference type="EMBL" id="AJ001443">
    <property type="protein sequence ID" value="CAB56791.1"/>
    <property type="molecule type" value="mRNA"/>
</dbReference>
<dbReference type="EMBL" id="D87686">
    <property type="protein sequence ID" value="BAA32662.2"/>
    <property type="status" value="ALT_INIT"/>
    <property type="molecule type" value="mRNA"/>
</dbReference>
<dbReference type="EMBL" id="D13642">
    <property type="protein sequence ID" value="BAA02805.1"/>
    <property type="status" value="ALT_INIT"/>
    <property type="molecule type" value="mRNA"/>
</dbReference>
<dbReference type="EMBL" id="BC000463">
    <property type="protein sequence ID" value="AAH00463.1"/>
    <property type="molecule type" value="mRNA"/>
</dbReference>
<dbReference type="EMBL" id="BC003146">
    <property type="protein sequence ID" value="AAH03146.1"/>
    <property type="molecule type" value="mRNA"/>
</dbReference>
<dbReference type="EMBL" id="BC009780">
    <property type="protein sequence ID" value="AAH09780.1"/>
    <property type="molecule type" value="mRNA"/>
</dbReference>
<dbReference type="EMBL" id="BC068974">
    <property type="protein sequence ID" value="AAH68974.1"/>
    <property type="molecule type" value="mRNA"/>
</dbReference>
<dbReference type="EMBL" id="AL110251">
    <property type="protein sequence ID" value="CAB53699.1"/>
    <property type="molecule type" value="mRNA"/>
</dbReference>
<dbReference type="CCDS" id="CCDS10894.1">
    <molecule id="Q15393-1"/>
</dbReference>
<dbReference type="PIR" id="T14779">
    <property type="entry name" value="T14779"/>
</dbReference>
<dbReference type="RefSeq" id="NP_036558.3">
    <molecule id="Q15393-1"/>
    <property type="nucleotide sequence ID" value="NM_012426.4"/>
</dbReference>
<dbReference type="PDB" id="5IFE">
    <property type="method" value="X-ray"/>
    <property type="resolution" value="3.10 A"/>
    <property type="chains" value="A=1-1217"/>
</dbReference>
<dbReference type="PDB" id="5O9Z">
    <property type="method" value="EM"/>
    <property type="resolution" value="4.50 A"/>
    <property type="chains" value="w=1-1217"/>
</dbReference>
<dbReference type="PDB" id="5Z56">
    <property type="method" value="EM"/>
    <property type="resolution" value="5.10 A"/>
    <property type="chains" value="3=1-1217"/>
</dbReference>
<dbReference type="PDB" id="5Z57">
    <property type="method" value="EM"/>
    <property type="resolution" value="6.50 A"/>
    <property type="chains" value="3=1-1217"/>
</dbReference>
<dbReference type="PDB" id="5Z58">
    <property type="method" value="EM"/>
    <property type="resolution" value="4.90 A"/>
    <property type="chains" value="3=1-1217"/>
</dbReference>
<dbReference type="PDB" id="5ZYA">
    <property type="method" value="EM"/>
    <property type="resolution" value="3.95 A"/>
    <property type="chains" value="A=1-1217"/>
</dbReference>
<dbReference type="PDB" id="6AH0">
    <property type="method" value="EM"/>
    <property type="resolution" value="5.70 A"/>
    <property type="chains" value="3=1-1217"/>
</dbReference>
<dbReference type="PDB" id="6AHD">
    <property type="method" value="EM"/>
    <property type="resolution" value="3.80 A"/>
    <property type="chains" value="3=1-1217"/>
</dbReference>
<dbReference type="PDB" id="6EN4">
    <property type="method" value="X-ray"/>
    <property type="resolution" value="3.08 A"/>
    <property type="chains" value="A=1-1217"/>
</dbReference>
<dbReference type="PDB" id="6FF4">
    <property type="method" value="EM"/>
    <property type="resolution" value="16.00 A"/>
    <property type="chains" value="v=1-1217"/>
</dbReference>
<dbReference type="PDB" id="6FF7">
    <property type="method" value="EM"/>
    <property type="resolution" value="4.50 A"/>
    <property type="chains" value="v=1-1217"/>
</dbReference>
<dbReference type="PDB" id="6QX9">
    <property type="method" value="EM"/>
    <property type="resolution" value="3.28 A"/>
    <property type="chains" value="B3=1-1217"/>
</dbReference>
<dbReference type="PDB" id="6Y50">
    <property type="method" value="EM"/>
    <property type="resolution" value="4.10 A"/>
    <property type="chains" value="v=1-1217"/>
</dbReference>
<dbReference type="PDB" id="6Y5Q">
    <property type="method" value="EM"/>
    <property type="resolution" value="7.10 A"/>
    <property type="chains" value="v=1-1217"/>
</dbReference>
<dbReference type="PDB" id="7ABG">
    <property type="method" value="EM"/>
    <property type="resolution" value="7.80 A"/>
    <property type="chains" value="E=1-1217"/>
</dbReference>
<dbReference type="PDB" id="7ABH">
    <property type="method" value="EM"/>
    <property type="resolution" value="4.50 A"/>
    <property type="chains" value="E=1-1217"/>
</dbReference>
<dbReference type="PDB" id="7ABI">
    <property type="method" value="EM"/>
    <property type="resolution" value="8.00 A"/>
    <property type="chains" value="E=1-1217"/>
</dbReference>
<dbReference type="PDB" id="7B0I">
    <property type="method" value="X-ray"/>
    <property type="resolution" value="3.00 A"/>
    <property type="chains" value="A=1-442, A=768-1217"/>
</dbReference>
<dbReference type="PDB" id="7B91">
    <property type="method" value="X-ray"/>
    <property type="resolution" value="3.00 A"/>
    <property type="chains" value="A=1-442, A=768-1216"/>
</dbReference>
<dbReference type="PDB" id="7B92">
    <property type="method" value="X-ray"/>
    <property type="resolution" value="3.00 A"/>
    <property type="chains" value="A=1-442, A=768-1216"/>
</dbReference>
<dbReference type="PDB" id="7B9C">
    <property type="method" value="X-ray"/>
    <property type="resolution" value="2.40 A"/>
    <property type="chains" value="A=916-1216"/>
</dbReference>
<dbReference type="PDB" id="7DVQ">
    <property type="method" value="EM"/>
    <property type="resolution" value="2.89 A"/>
    <property type="chains" value="3=1-1217"/>
</dbReference>
<dbReference type="PDB" id="7EVN">
    <property type="method" value="EM"/>
    <property type="resolution" value="2.60 A"/>
    <property type="chains" value="A=1-1217"/>
</dbReference>
<dbReference type="PDB" id="7EVO">
    <property type="method" value="EM"/>
    <property type="resolution" value="2.50 A"/>
    <property type="chains" value="3=1-1217"/>
</dbReference>
<dbReference type="PDB" id="7KTS">
    <property type="method" value="EM"/>
    <property type="resolution" value="19.09 A"/>
    <property type="chains" value="S=1-1217"/>
</dbReference>
<dbReference type="PDB" id="7OMF">
    <property type="method" value="X-ray"/>
    <property type="resolution" value="3.00 A"/>
    <property type="chains" value="A=1-442, A=768-1217"/>
</dbReference>
<dbReference type="PDB" id="7ONB">
    <property type="method" value="EM"/>
    <property type="resolution" value="3.10 A"/>
    <property type="chains" value="A=1-1217"/>
</dbReference>
<dbReference type="PDB" id="7OPI">
    <property type="method" value="X-ray"/>
    <property type="resolution" value="3.10 A"/>
    <property type="chains" value="A=916-1217"/>
</dbReference>
<dbReference type="PDB" id="7Q3L">
    <property type="method" value="EM"/>
    <property type="resolution" value="2.30 A"/>
    <property type="chains" value="C=1-1217"/>
</dbReference>
<dbReference type="PDB" id="7Q4O">
    <property type="method" value="EM"/>
    <property type="resolution" value="2.20 A"/>
    <property type="chains" value="C=1-1217"/>
</dbReference>
<dbReference type="PDB" id="7Q4P">
    <property type="method" value="EM"/>
    <property type="resolution" value="2.20 A"/>
    <property type="chains" value="C=1-1217"/>
</dbReference>
<dbReference type="PDB" id="7QTT">
    <property type="method" value="EM"/>
    <property type="resolution" value="3.10 A"/>
    <property type="chains" value="A=1-1217"/>
</dbReference>
<dbReference type="PDB" id="7VPX">
    <property type="method" value="EM"/>
    <property type="resolution" value="3.00 A"/>
    <property type="chains" value="3=1-1217"/>
</dbReference>
<dbReference type="PDB" id="8CH6">
    <property type="method" value="EM"/>
    <property type="resolution" value="5.90 A"/>
    <property type="chains" value="A=1-1217"/>
</dbReference>
<dbReference type="PDB" id="8H6E">
    <property type="method" value="EM"/>
    <property type="resolution" value="3.20 A"/>
    <property type="chains" value="2I=1-1217"/>
</dbReference>
<dbReference type="PDB" id="8H6J">
    <property type="method" value="EM"/>
    <property type="resolution" value="3.25 A"/>
    <property type="chains" value="2I=1-1217"/>
</dbReference>
<dbReference type="PDB" id="8H6K">
    <property type="method" value="EM"/>
    <property type="resolution" value="2.70 A"/>
    <property type="chains" value="2I=1-1217"/>
</dbReference>
<dbReference type="PDB" id="8H6L">
    <property type="method" value="EM"/>
    <property type="resolution" value="2.60 A"/>
    <property type="chains" value="2I=1-1217"/>
</dbReference>
<dbReference type="PDB" id="8H7G">
    <property type="method" value="EM"/>
    <property type="resolution" value="3.70 A"/>
    <property type="chains" value="A=1-1217"/>
</dbReference>
<dbReference type="PDB" id="8HK1">
    <property type="method" value="EM"/>
    <property type="resolution" value="2.70 A"/>
    <property type="chains" value="3=1-1217"/>
</dbReference>
<dbReference type="PDB" id="8I0P">
    <property type="method" value="EM"/>
    <property type="resolution" value="3.40 A"/>
    <property type="chains" value="3=1-1217"/>
</dbReference>
<dbReference type="PDB" id="8I0R">
    <property type="method" value="EM"/>
    <property type="resolution" value="3.00 A"/>
    <property type="chains" value="3=1-1217"/>
</dbReference>
<dbReference type="PDB" id="8I0S">
    <property type="method" value="EM"/>
    <property type="resolution" value="4.20 A"/>
    <property type="chains" value="3=1-1217"/>
</dbReference>
<dbReference type="PDB" id="8I0T">
    <property type="method" value="EM"/>
    <property type="resolution" value="3.00 A"/>
    <property type="chains" value="3=1-1217"/>
</dbReference>
<dbReference type="PDB" id="8I0U">
    <property type="method" value="EM"/>
    <property type="resolution" value="3.30 A"/>
    <property type="chains" value="3=1-1217"/>
</dbReference>
<dbReference type="PDB" id="8I0V">
    <property type="method" value="EM"/>
    <property type="resolution" value="3.00 A"/>
    <property type="chains" value="3=1-1217"/>
</dbReference>
<dbReference type="PDB" id="8QO9">
    <property type="method" value="EM"/>
    <property type="resolution" value="5.29 A"/>
    <property type="chains" value="B3=1-1217"/>
</dbReference>
<dbReference type="PDB" id="8QXD">
    <property type="method" value="EM"/>
    <property type="resolution" value="9.60 A"/>
    <property type="chains" value="B3=1-1217"/>
</dbReference>
<dbReference type="PDB" id="8QZS">
    <property type="method" value="EM"/>
    <property type="resolution" value="4.10 A"/>
    <property type="chains" value="B3=1-1217"/>
</dbReference>
<dbReference type="PDB" id="8R08">
    <property type="method" value="EM"/>
    <property type="resolution" value="6.10 A"/>
    <property type="chains" value="B3=1-1217"/>
</dbReference>
<dbReference type="PDB" id="8R09">
    <property type="method" value="EM"/>
    <property type="resolution" value="4.30 A"/>
    <property type="chains" value="B3=1-1217"/>
</dbReference>
<dbReference type="PDB" id="8R0A">
    <property type="method" value="EM"/>
    <property type="resolution" value="5.80 A"/>
    <property type="chains" value="B3=1-1217"/>
</dbReference>
<dbReference type="PDB" id="8R0B">
    <property type="method" value="EM"/>
    <property type="resolution" value="4.40 A"/>
    <property type="chains" value="B3=1-1217"/>
</dbReference>
<dbReference type="PDB" id="8RM5">
    <property type="method" value="EM"/>
    <property type="resolution" value="6.90 A"/>
    <property type="chains" value="B3=1-1217"/>
</dbReference>
<dbReference type="PDB" id="8Y7E">
    <property type="method" value="EM"/>
    <property type="resolution" value="4.66 A"/>
    <property type="chains" value="3=1-1217"/>
</dbReference>
<dbReference type="PDBsum" id="5IFE"/>
<dbReference type="PDBsum" id="5O9Z"/>
<dbReference type="PDBsum" id="5Z56"/>
<dbReference type="PDBsum" id="5Z57"/>
<dbReference type="PDBsum" id="5Z58"/>
<dbReference type="PDBsum" id="5ZYA"/>
<dbReference type="PDBsum" id="6AH0"/>
<dbReference type="PDBsum" id="6AHD"/>
<dbReference type="PDBsum" id="6EN4"/>
<dbReference type="PDBsum" id="6FF4"/>
<dbReference type="PDBsum" id="6FF7"/>
<dbReference type="PDBsum" id="6QX9"/>
<dbReference type="PDBsum" id="6Y50"/>
<dbReference type="PDBsum" id="6Y5Q"/>
<dbReference type="PDBsum" id="7ABG"/>
<dbReference type="PDBsum" id="7ABH"/>
<dbReference type="PDBsum" id="7ABI"/>
<dbReference type="PDBsum" id="7B0I"/>
<dbReference type="PDBsum" id="7B91"/>
<dbReference type="PDBsum" id="7B92"/>
<dbReference type="PDBsum" id="7B9C"/>
<dbReference type="PDBsum" id="7DVQ"/>
<dbReference type="PDBsum" id="7EVN"/>
<dbReference type="PDBsum" id="7EVO"/>
<dbReference type="PDBsum" id="7KTS"/>
<dbReference type="PDBsum" id="7OMF"/>
<dbReference type="PDBsum" id="7ONB"/>
<dbReference type="PDBsum" id="7OPI"/>
<dbReference type="PDBsum" id="7Q3L"/>
<dbReference type="PDBsum" id="7Q4O"/>
<dbReference type="PDBsum" id="7Q4P"/>
<dbReference type="PDBsum" id="7QTT"/>
<dbReference type="PDBsum" id="7VPX"/>
<dbReference type="PDBsum" id="8CH6"/>
<dbReference type="PDBsum" id="8H6E"/>
<dbReference type="PDBsum" id="8H6J"/>
<dbReference type="PDBsum" id="8H6K"/>
<dbReference type="PDBsum" id="8H6L"/>
<dbReference type="PDBsum" id="8H7G"/>
<dbReference type="PDBsum" id="8HK1"/>
<dbReference type="PDBsum" id="8I0P"/>
<dbReference type="PDBsum" id="8I0R"/>
<dbReference type="PDBsum" id="8I0S"/>
<dbReference type="PDBsum" id="8I0T"/>
<dbReference type="PDBsum" id="8I0U"/>
<dbReference type="PDBsum" id="8I0V"/>
<dbReference type="PDBsum" id="8QO9"/>
<dbReference type="PDBsum" id="8QXD"/>
<dbReference type="PDBsum" id="8QZS"/>
<dbReference type="PDBsum" id="8R08"/>
<dbReference type="PDBsum" id="8R09"/>
<dbReference type="PDBsum" id="8R0A"/>
<dbReference type="PDBsum" id="8R0B"/>
<dbReference type="PDBsum" id="8RM5"/>
<dbReference type="PDBsum" id="8Y7E"/>
<dbReference type="EMDB" id="EMD-10688"/>
<dbReference type="EMDB" id="EMD-11695"/>
<dbReference type="EMDB" id="EMD-11696"/>
<dbReference type="EMDB" id="EMD-11697"/>
<dbReference type="EMDB" id="EMD-12965"/>
<dbReference type="EMDB" id="EMD-12994"/>
<dbReference type="EMDB" id="EMD-13793"/>
<dbReference type="EMDB" id="EMD-13811"/>
<dbReference type="EMDB" id="EMD-13812"/>
<dbReference type="EMDB" id="EMD-14146"/>
<dbReference type="EMDB" id="EMD-16658"/>
<dbReference type="EMDB" id="EMD-18529"/>
<dbReference type="EMDB" id="EMD-18718"/>
<dbReference type="EMDB" id="EMD-18781"/>
<dbReference type="EMDB" id="EMD-18786"/>
<dbReference type="EMDB" id="EMD-18787"/>
<dbReference type="EMDB" id="EMD-18788"/>
<dbReference type="EMDB" id="EMD-18789"/>
<dbReference type="EMDB" id="EMD-19349"/>
<dbReference type="EMDB" id="EMD-20554"/>
<dbReference type="EMDB" id="EMD-23028"/>
<dbReference type="EMDB" id="EMD-30875"/>
<dbReference type="EMDB" id="EMD-31330"/>
<dbReference type="EMDB" id="EMD-31334"/>
<dbReference type="EMDB" id="EMD-32074"/>
<dbReference type="EMDB" id="EMD-34500"/>
<dbReference type="EMDB" id="EMD-34505"/>
<dbReference type="EMDB" id="EMD-34507"/>
<dbReference type="EMDB" id="EMD-34508"/>
<dbReference type="EMDB" id="EMD-34520"/>
<dbReference type="EMDB" id="EMD-34841"/>
<dbReference type="EMDB" id="EMD-35105"/>
<dbReference type="EMDB" id="EMD-35107"/>
<dbReference type="EMDB" id="EMD-35108"/>
<dbReference type="EMDB" id="EMD-35109"/>
<dbReference type="EMDB" id="EMD-35110"/>
<dbReference type="EMDB" id="EMD-35111"/>
<dbReference type="EMDB" id="EMD-3766"/>
<dbReference type="EMDB" id="EMD-39013"/>
<dbReference type="EMDB" id="EMD-4255"/>
<dbReference type="EMDB" id="EMD-4665"/>
<dbReference type="EMDB" id="EMD-6889"/>
<dbReference type="EMDB" id="EMD-6890"/>
<dbReference type="EMDB" id="EMD-6891"/>
<dbReference type="EMDB" id="EMD-6915"/>
<dbReference type="EMDB" id="EMD-9621"/>
<dbReference type="EMDB" id="EMD-9624"/>
<dbReference type="SMR" id="Q15393"/>
<dbReference type="BioGRID" id="117016">
    <property type="interactions" value="584"/>
</dbReference>
<dbReference type="ComplexPortal" id="CPX-2227">
    <property type="entry name" value="SF3B complex"/>
</dbReference>
<dbReference type="ComplexPortal" id="CPX-2539">
    <property type="entry name" value="U2 small nuclear ribonucleoprotein complex"/>
</dbReference>
<dbReference type="ComplexPortal" id="CPX-6802">
    <property type="entry name" value="SAGA complex, KAT2B variant"/>
</dbReference>
<dbReference type="ComplexPortal" id="CPX-900">
    <property type="entry name" value="SAGA complex, KAT2A variant"/>
</dbReference>
<dbReference type="CORUM" id="Q15393"/>
<dbReference type="DIP" id="DIP-28152N"/>
<dbReference type="FunCoup" id="Q15393">
    <property type="interactions" value="3797"/>
</dbReference>
<dbReference type="IntAct" id="Q15393">
    <property type="interactions" value="241"/>
</dbReference>
<dbReference type="MINT" id="Q15393"/>
<dbReference type="STRING" id="9606.ENSP00000305790"/>
<dbReference type="BindingDB" id="Q15393"/>
<dbReference type="ChEMBL" id="CHEMBL1250378"/>
<dbReference type="DrugBank" id="DB04216">
    <property type="generic name" value="Quercetin"/>
</dbReference>
<dbReference type="DrugCentral" id="Q15393"/>
<dbReference type="GlyCosmos" id="Q15393">
    <property type="glycosylation" value="1 site, 1 glycan"/>
</dbReference>
<dbReference type="GlyGen" id="Q15393">
    <property type="glycosylation" value="4 sites, 2 N-linked glycans (2 sites), 1 O-linked glycan (2 sites)"/>
</dbReference>
<dbReference type="iPTMnet" id="Q15393"/>
<dbReference type="MetOSite" id="Q15393"/>
<dbReference type="PhosphoSitePlus" id="Q15393"/>
<dbReference type="SwissPalm" id="Q15393"/>
<dbReference type="BioMuta" id="SF3B3"/>
<dbReference type="DMDM" id="116242787"/>
<dbReference type="jPOST" id="Q15393"/>
<dbReference type="MassIVE" id="Q15393"/>
<dbReference type="PaxDb" id="9606-ENSP00000305790"/>
<dbReference type="PeptideAtlas" id="Q15393"/>
<dbReference type="ProteomicsDB" id="60563">
    <molecule id="Q15393-1"/>
</dbReference>
<dbReference type="ProteomicsDB" id="60564">
    <molecule id="Q15393-2"/>
</dbReference>
<dbReference type="ProteomicsDB" id="60565">
    <molecule id="Q15393-3"/>
</dbReference>
<dbReference type="Pumba" id="Q15393"/>
<dbReference type="Antibodypedia" id="30001">
    <property type="antibodies" value="328 antibodies from 37 providers"/>
</dbReference>
<dbReference type="DNASU" id="23450"/>
<dbReference type="Ensembl" id="ENST00000302516.10">
    <molecule id="Q15393-1"/>
    <property type="protein sequence ID" value="ENSP00000305790.5"/>
    <property type="gene ID" value="ENSG00000189091.13"/>
</dbReference>
<dbReference type="GeneID" id="23450"/>
<dbReference type="KEGG" id="hsa:23450"/>
<dbReference type="MANE-Select" id="ENST00000302516.10">
    <property type="protein sequence ID" value="ENSP00000305790.5"/>
    <property type="RefSeq nucleotide sequence ID" value="NM_012426.5"/>
    <property type="RefSeq protein sequence ID" value="NP_036558.3"/>
</dbReference>
<dbReference type="UCSC" id="uc002ezf.3">
    <molecule id="Q15393-1"/>
    <property type="organism name" value="human"/>
</dbReference>
<dbReference type="AGR" id="HGNC:10770"/>
<dbReference type="CTD" id="23450"/>
<dbReference type="DisGeNET" id="23450"/>
<dbReference type="GeneCards" id="SF3B3"/>
<dbReference type="HGNC" id="HGNC:10770">
    <property type="gene designation" value="SF3B3"/>
</dbReference>
<dbReference type="HPA" id="ENSG00000189091">
    <property type="expression patterns" value="Low tissue specificity"/>
</dbReference>
<dbReference type="MalaCards" id="SF3B3"/>
<dbReference type="MIM" id="605592">
    <property type="type" value="gene"/>
</dbReference>
<dbReference type="neXtProt" id="NX_Q15393"/>
<dbReference type="OpenTargets" id="ENSG00000189091"/>
<dbReference type="PharmGKB" id="PA35688"/>
<dbReference type="VEuPathDB" id="HostDB:ENSG00000189091"/>
<dbReference type="eggNOG" id="KOG1898">
    <property type="taxonomic scope" value="Eukaryota"/>
</dbReference>
<dbReference type="GeneTree" id="ENSGT00950000183151"/>
<dbReference type="HOGENOM" id="CLU_003246_0_0_1"/>
<dbReference type="InParanoid" id="Q15393"/>
<dbReference type="OMA" id="PRATGHW"/>
<dbReference type="OrthoDB" id="436637at2759"/>
<dbReference type="PAN-GO" id="Q15393">
    <property type="GO annotations" value="4 GO annotations based on evolutionary models"/>
</dbReference>
<dbReference type="PhylomeDB" id="Q15393"/>
<dbReference type="TreeFam" id="TF105685"/>
<dbReference type="PathwayCommons" id="Q15393"/>
<dbReference type="Reactome" id="R-HSA-72163">
    <property type="pathway name" value="mRNA Splicing - Major Pathway"/>
</dbReference>
<dbReference type="Reactome" id="R-HSA-72165">
    <property type="pathway name" value="mRNA Splicing - Minor Pathway"/>
</dbReference>
<dbReference type="SignaLink" id="Q15393"/>
<dbReference type="SIGNOR" id="Q15393"/>
<dbReference type="BioGRID-ORCS" id="23450">
    <property type="hits" value="836 hits in 1140 CRISPR screens"/>
</dbReference>
<dbReference type="CD-CODE" id="232F8A39">
    <property type="entry name" value="P-body"/>
</dbReference>
<dbReference type="ChiTaRS" id="SF3B3">
    <property type="organism name" value="human"/>
</dbReference>
<dbReference type="GeneWiki" id="SF3B3"/>
<dbReference type="GenomeRNAi" id="23450"/>
<dbReference type="Pharos" id="Q15393">
    <property type="development level" value="Tchem"/>
</dbReference>
<dbReference type="PRO" id="PR:Q15393"/>
<dbReference type="Proteomes" id="UP000005640">
    <property type="component" value="Chromosome 16"/>
</dbReference>
<dbReference type="RNAct" id="Q15393">
    <property type="molecule type" value="protein"/>
</dbReference>
<dbReference type="Bgee" id="ENSG00000189091">
    <property type="expression patterns" value="Expressed in ventricular zone and 211 other cell types or tissues"/>
</dbReference>
<dbReference type="ExpressionAtlas" id="Q15393">
    <property type="expression patterns" value="baseline and differential"/>
</dbReference>
<dbReference type="GO" id="GO:0071013">
    <property type="term" value="C:catalytic step 2 spliceosome"/>
    <property type="evidence" value="ECO:0000314"/>
    <property type="project" value="UniProtKB"/>
</dbReference>
<dbReference type="GO" id="GO:0005730">
    <property type="term" value="C:nucleolus"/>
    <property type="evidence" value="ECO:0000314"/>
    <property type="project" value="HPA"/>
</dbReference>
<dbReference type="GO" id="GO:0005654">
    <property type="term" value="C:nucleoplasm"/>
    <property type="evidence" value="ECO:0000314"/>
    <property type="project" value="HPA"/>
</dbReference>
<dbReference type="GO" id="GO:0005634">
    <property type="term" value="C:nucleus"/>
    <property type="evidence" value="ECO:0000314"/>
    <property type="project" value="UniProtKB"/>
</dbReference>
<dbReference type="GO" id="GO:0000124">
    <property type="term" value="C:SAGA complex"/>
    <property type="evidence" value="ECO:0000303"/>
    <property type="project" value="ComplexPortal"/>
</dbReference>
<dbReference type="GO" id="GO:0005681">
    <property type="term" value="C:spliceosomal complex"/>
    <property type="evidence" value="ECO:0000303"/>
    <property type="project" value="ComplexPortal"/>
</dbReference>
<dbReference type="GO" id="GO:0005689">
    <property type="term" value="C:U12-type spliceosomal complex"/>
    <property type="evidence" value="ECO:0000314"/>
    <property type="project" value="UniProtKB"/>
</dbReference>
<dbReference type="GO" id="GO:0005686">
    <property type="term" value="C:U2 snRNP"/>
    <property type="evidence" value="ECO:0000318"/>
    <property type="project" value="GO_Central"/>
</dbReference>
<dbReference type="GO" id="GO:0071005">
    <property type="term" value="C:U2-type precatalytic spliceosome"/>
    <property type="evidence" value="ECO:0000314"/>
    <property type="project" value="UniProtKB"/>
</dbReference>
<dbReference type="GO" id="GO:0005684">
    <property type="term" value="C:U2-type spliceosomal complex"/>
    <property type="evidence" value="ECO:0000314"/>
    <property type="project" value="UniProtKB"/>
</dbReference>
<dbReference type="GO" id="GO:0044877">
    <property type="term" value="F:protein-containing complex binding"/>
    <property type="evidence" value="ECO:0000353"/>
    <property type="project" value="UniProtKB"/>
</dbReference>
<dbReference type="GO" id="GO:0030620">
    <property type="term" value="F:U2 snRNA binding"/>
    <property type="evidence" value="ECO:0000318"/>
    <property type="project" value="GO_Central"/>
</dbReference>
<dbReference type="GO" id="GO:0000398">
    <property type="term" value="P:mRNA splicing, via spliceosome"/>
    <property type="evidence" value="ECO:0000314"/>
    <property type="project" value="UniProtKB"/>
</dbReference>
<dbReference type="GO" id="GO:0042177">
    <property type="term" value="P:negative regulation of protein catabolic process"/>
    <property type="evidence" value="ECO:0000314"/>
    <property type="project" value="CACAO"/>
</dbReference>
<dbReference type="GO" id="GO:0045893">
    <property type="term" value="P:positive regulation of DNA-templated transcription"/>
    <property type="evidence" value="ECO:0000303"/>
    <property type="project" value="ComplexPortal"/>
</dbReference>
<dbReference type="GO" id="GO:0006282">
    <property type="term" value="P:regulation of DNA repair"/>
    <property type="evidence" value="ECO:0000303"/>
    <property type="project" value="ComplexPortal"/>
</dbReference>
<dbReference type="GO" id="GO:0043484">
    <property type="term" value="P:regulation of RNA splicing"/>
    <property type="evidence" value="ECO:0000303"/>
    <property type="project" value="ComplexPortal"/>
</dbReference>
<dbReference type="GO" id="GO:0008380">
    <property type="term" value="P:RNA splicing"/>
    <property type="evidence" value="ECO:0000305"/>
    <property type="project" value="UniProtKB"/>
</dbReference>
<dbReference type="GO" id="GO:0000375">
    <property type="term" value="P:RNA splicing, via transesterification reactions"/>
    <property type="evidence" value="ECO:0000304"/>
    <property type="project" value="UniProtKB"/>
</dbReference>
<dbReference type="GO" id="GO:1903241">
    <property type="term" value="P:U2-type prespliceosome assembly"/>
    <property type="evidence" value="ECO:0000303"/>
    <property type="project" value="ComplexPortal"/>
</dbReference>
<dbReference type="FunFam" id="2.130.10.10:FF:001721">
    <property type="entry name" value="Spliceosomal protein sap, putative"/>
    <property type="match status" value="1"/>
</dbReference>
<dbReference type="FunFam" id="1.10.150.910:FF:000002">
    <property type="entry name" value="Splicing factor 3B subunit 3"/>
    <property type="match status" value="1"/>
</dbReference>
<dbReference type="FunFam" id="2.130.10.10:FF:000027">
    <property type="entry name" value="Splicing factor 3B subunit 3"/>
    <property type="match status" value="1"/>
</dbReference>
<dbReference type="FunFam" id="2.130.10.10:FF:000041">
    <property type="entry name" value="Splicing factor 3b subunit 3"/>
    <property type="match status" value="1"/>
</dbReference>
<dbReference type="Gene3D" id="1.10.150.910">
    <property type="match status" value="1"/>
</dbReference>
<dbReference type="Gene3D" id="2.130.10.10">
    <property type="entry name" value="YVTN repeat-like/Quinoprotein amine dehydrogenase"/>
    <property type="match status" value="3"/>
</dbReference>
<dbReference type="InterPro" id="IPR018846">
    <property type="entry name" value="Beta-prop_RSE1/DDB1/CPSF1_1st"/>
</dbReference>
<dbReference type="InterPro" id="IPR004871">
    <property type="entry name" value="Cleavage/polyA-sp_fac_asu_C"/>
</dbReference>
<dbReference type="InterPro" id="IPR050358">
    <property type="entry name" value="RSE1/DDB1/CFT1/CPSF1"/>
</dbReference>
<dbReference type="InterPro" id="IPR015943">
    <property type="entry name" value="WD40/YVTN_repeat-like_dom_sf"/>
</dbReference>
<dbReference type="InterPro" id="IPR036322">
    <property type="entry name" value="WD40_repeat_dom_sf"/>
</dbReference>
<dbReference type="PANTHER" id="PTHR10644">
    <property type="entry name" value="DNA REPAIR/RNA PROCESSING CPSF FAMILY"/>
    <property type="match status" value="1"/>
</dbReference>
<dbReference type="Pfam" id="PF10433">
    <property type="entry name" value="Beta-prop_RSE1_1st"/>
    <property type="match status" value="1"/>
</dbReference>
<dbReference type="Pfam" id="PF23726">
    <property type="entry name" value="Beta-prop_RSE1_2nd"/>
    <property type="match status" value="1"/>
</dbReference>
<dbReference type="Pfam" id="PF03178">
    <property type="entry name" value="CPSF_A"/>
    <property type="match status" value="1"/>
</dbReference>
<dbReference type="SUPFAM" id="SSF50978">
    <property type="entry name" value="WD40 repeat-like"/>
    <property type="match status" value="1"/>
</dbReference>
<gene>
    <name type="primary">SF3B3</name>
    <name type="synonym">KIAA0017</name>
    <name evidence="16" type="synonym">SAP130</name>
</gene>
<comment type="function">
    <text evidence="1 2 6 8 9 11 12 13 14">Component of the 17S U2 SnRNP complex of the spliceosome, a large ribonucleoprotein complex that removes introns from transcribed pre-mRNAs (PubMed:10490618, PubMed:10882114, PubMed:12234937, PubMed:27720643, PubMed:28781166, PubMed:32494006, PubMed:34822310). The 17S U2 SnRNP complex (1) directly participates in early spliceosome assembly and (2) mediates recognition of the intron branch site during pre-mRNA splicing by promoting the selection of the pre-mRNA branch-site adenosine, the nucleophile for the first step of splicing (PubMed:12234937, PubMed:32494006, PubMed:34822310). Within the 17S U2 SnRNP complex, SF3B3 is part of the SF3B subcomplex, which is required for 'A' complex assembly formed by the stable binding of U2 snRNP to the branchpoint sequence in pre-mRNA (PubMed:12234937, PubMed:27720643). Sequence independent binding of SF3A and SF3B subcomplexes upstream of the branch site is essential, it may anchor U2 snRNP to the pre-mRNA (PubMed:12234937). May also be involved in the assembly of the 'E' complex (PubMed:10882114). Also acts as a component of the minor spliceosome, which is involved in the splicing of U12-type introns in pre-mRNAs (PubMed:15146077, PubMed:33509932).</text>
</comment>
<comment type="subunit">
    <text evidence="1 2 3 4 5 6 7 8 9 10 11 12 13 14 15">Component of the 17S U2 SnRNP complex, a ribonucleoprotein complex that contains small nuclear RNA (snRNA) U2 and a number of specific proteins (PubMed:11991638, PubMed:12234937, PubMed:15146077, PubMed:32494006, PubMed:34822310, PubMed:36797247). Part of the SF3B subcomplex of the 17S U2 SnRNP complex (PubMed:12234937, PubMed:12738865, PubMed:27720643, PubMed:28541300). SF3B associates with the splicing subcomplex SF3A and a 12S RNA unit to form the U2 small nuclear ribonucleoproteins complex (U2 snRNP) (PubMed:12234937). Within the SF3B subcomplex, interacts directly with SF3B1 (via HEAT domain), SF3B5 and PHF5A (PubMed:27720643). Identified in the spliceosome A complex; remains associated with the spliceosome throughout the splicing process (PubMed:10490618). Component of the spliceosome B complex (PubMed:28781166). Identified in the spliceosome C complex (PubMed:11991638). Identified in the spliceosome E complex (PubMed:10882114). Component of the minor (U12-type spliceosome) spliceosome (PubMed:15146077, PubMed:33509932). Within this complex, interacts with SCNM1 (PubMed:33509932). Associates with the STAGA transcription coactivator-HAT complex (PubMed:11564863). Interacts with SUPT3H (PubMed:11564863). Interacts with TAF3 (PubMed:11438666).</text>
</comment>
<comment type="interaction">
    <interactant intactId="EBI-346977">
        <id>Q15393</id>
    </interactant>
    <interactant intactId="EBI-930964">
        <id>P54253</id>
        <label>ATXN1</label>
    </interactant>
    <organismsDiffer>false</organismsDiffer>
    <experiments>3</experiments>
</comment>
<comment type="interaction">
    <interactant intactId="EBI-346977">
        <id>Q15393</id>
    </interactant>
    <interactant intactId="EBI-718729">
        <id>P55212</id>
        <label>CASP6</label>
    </interactant>
    <organismsDiffer>false</organismsDiffer>
    <experiments>3</experiments>
</comment>
<comment type="interaction">
    <interactant intactId="EBI-346977">
        <id>Q15393</id>
    </interactant>
    <interactant intactId="EBI-473886">
        <id>O00291</id>
        <label>HIP1</label>
    </interactant>
    <organismsDiffer>false</organismsDiffer>
    <experiments>3</experiments>
</comment>
<comment type="interaction">
    <interactant intactId="EBI-346977">
        <id>Q15393</id>
    </interactant>
    <interactant intactId="EBI-466029">
        <id>P42858</id>
        <label>HTT</label>
    </interactant>
    <organismsDiffer>false</organismsDiffer>
    <experiments>3</experiments>
</comment>
<comment type="interaction">
    <interactant intactId="EBI-346977">
        <id>Q15393</id>
    </interactant>
    <interactant intactId="EBI-744342">
        <id>Q8IVD9</id>
        <label>NUDCD3</label>
    </interactant>
    <organismsDiffer>false</organismsDiffer>
    <experiments>2</experiments>
</comment>
<comment type="interaction">
    <interactant intactId="EBI-346977">
        <id>Q15393</id>
    </interactant>
    <interactant intactId="EBI-21251460">
        <id>O60260-5</id>
        <label>PRKN</label>
    </interactant>
    <organismsDiffer>false</organismsDiffer>
    <experiments>3</experiments>
</comment>
<comment type="interaction">
    <interactant intactId="EBI-346977">
        <id>Q15393</id>
    </interactant>
    <interactant intactId="EBI-2462271">
        <id>Q15428</id>
        <label>SF3A2</label>
    </interactant>
    <organismsDiffer>false</organismsDiffer>
    <experiments>2</experiments>
</comment>
<comment type="interaction">
    <interactant intactId="EBI-346977">
        <id>Q15393</id>
    </interactant>
    <interactant intactId="EBI-1051880">
        <id>Q12874</id>
        <label>SF3A3</label>
    </interactant>
    <organismsDiffer>false</organismsDiffer>
    <experiments>3</experiments>
</comment>
<comment type="interaction">
    <interactant intactId="EBI-346977">
        <id>Q15393</id>
    </interactant>
    <interactant intactId="EBI-990792">
        <id>P00441</id>
        <label>SOD1</label>
    </interactant>
    <organismsDiffer>false</organismsDiffer>
    <experiments>3</experiments>
</comment>
<comment type="interaction">
    <interactant intactId="EBI-346977">
        <id>Q15393</id>
    </interactant>
    <interactant intactId="EBI-372899">
        <id>Q13148</id>
        <label>TARDBP</label>
    </interactant>
    <organismsDiffer>false</organismsDiffer>
    <experiments>6</experiments>
</comment>
<comment type="interaction">
    <interactant intactId="EBI-346977">
        <id>Q15393</id>
    </interactant>
    <interactant intactId="EBI-12157263">
        <id>P40337-2</id>
        <label>VHL</label>
    </interactant>
    <organismsDiffer>false</organismsDiffer>
    <experiments>3</experiments>
</comment>
<comment type="subcellular location">
    <subcellularLocation>
        <location evidence="1 4 9 10 11">Nucleus</location>
    </subcellularLocation>
</comment>
<comment type="alternative products">
    <event type="alternative splicing"/>
    <isoform>
        <id>Q15393-1</id>
        <name>1</name>
        <sequence type="displayed"/>
    </isoform>
    <isoform>
        <id>Q15393-2</id>
        <name>2</name>
        <sequence type="described" ref="VSP_022978 VSP_022979"/>
    </isoform>
    <isoform>
        <id>Q15393-3</id>
        <name>3</name>
        <sequence type="described" ref="VSP_022977"/>
    </isoform>
</comment>
<comment type="domain">
    <text evidence="9">The core of the protein consists of three beta-propeller domains.</text>
</comment>
<comment type="similarity">
    <text evidence="18">Belongs to the RSE1 family.</text>
</comment>
<comment type="sequence caution" evidence="18">
    <conflict type="erroneous initiation">
        <sequence resource="EMBL-CDS" id="BAA02805"/>
    </conflict>
</comment>
<comment type="sequence caution" evidence="18">
    <conflict type="erroneous initiation">
        <sequence resource="EMBL-CDS" id="BAA32662"/>
    </conflict>
</comment>
<accession>Q15393</accession>
<accession>Q6NTI8</accession>
<accession>Q96GC0</accession>
<accession>Q9BPY2</accession>
<accession>Q9UFX7</accession>
<accession>Q9UJ29</accession>
<organism>
    <name type="scientific">Homo sapiens</name>
    <name type="common">Human</name>
    <dbReference type="NCBI Taxonomy" id="9606"/>
    <lineage>
        <taxon>Eukaryota</taxon>
        <taxon>Metazoa</taxon>
        <taxon>Chordata</taxon>
        <taxon>Craniata</taxon>
        <taxon>Vertebrata</taxon>
        <taxon>Euteleostomi</taxon>
        <taxon>Mammalia</taxon>
        <taxon>Eutheria</taxon>
        <taxon>Euarchontoglires</taxon>
        <taxon>Primates</taxon>
        <taxon>Haplorrhini</taxon>
        <taxon>Catarrhini</taxon>
        <taxon>Hominidae</taxon>
        <taxon>Homo</taxon>
    </lineage>
</organism>
<proteinExistence type="evidence at protein level"/>
<keyword id="KW-0002">3D-structure</keyword>
<keyword id="KW-0025">Alternative splicing</keyword>
<keyword id="KW-0903">Direct protein sequencing</keyword>
<keyword id="KW-0507">mRNA processing</keyword>
<keyword id="KW-0508">mRNA splicing</keyword>
<keyword id="KW-0539">Nucleus</keyword>
<keyword id="KW-0597">Phosphoprotein</keyword>
<keyword id="KW-1267">Proteomics identification</keyword>
<keyword id="KW-1185">Reference proteome</keyword>
<keyword id="KW-0747">Spliceosome</keyword>